<accession>Q11RW9</accession>
<sequence>MTLQNESINRVENRKKYCRFKKMGIFYIDYKDPNFLLKFVNEQGKILPRRLTGTSLKYQRKVSQAVKRARLIGLLPYVTDSLK</sequence>
<reference key="1">
    <citation type="journal article" date="2007" name="Appl. Environ. Microbiol.">
        <title>Genome sequence of the cellulolytic gliding bacterium Cytophaga hutchinsonii.</title>
        <authorList>
            <person name="Xie G."/>
            <person name="Bruce D.C."/>
            <person name="Challacombe J.F."/>
            <person name="Chertkov O."/>
            <person name="Detter J.C."/>
            <person name="Gilna P."/>
            <person name="Han C.S."/>
            <person name="Lucas S."/>
            <person name="Misra M."/>
            <person name="Myers G.L."/>
            <person name="Richardson P."/>
            <person name="Tapia R."/>
            <person name="Thayer N."/>
            <person name="Thompson L.S."/>
            <person name="Brettin T.S."/>
            <person name="Henrissat B."/>
            <person name="Wilson D.B."/>
            <person name="McBride M.J."/>
        </authorList>
    </citation>
    <scope>NUCLEOTIDE SEQUENCE [LARGE SCALE GENOMIC DNA]</scope>
    <source>
        <strain>ATCC 33406 / DSM 1761 / JCM 20678 / CIP 103989 / IAM 12607 / NBRC 15051 / NCIMB 9469 / D465</strain>
    </source>
</reference>
<feature type="chain" id="PRO_0000345453" description="Small ribosomal subunit protein bS18">
    <location>
        <begin position="1"/>
        <end position="83"/>
    </location>
</feature>
<comment type="function">
    <text evidence="1">Binds as a heterodimer with protein bS6 to the central domain of the 16S rRNA, where it helps stabilize the platform of the 30S subunit.</text>
</comment>
<comment type="subunit">
    <text evidence="1">Part of the 30S ribosomal subunit. Forms a tight heterodimer with protein bS6.</text>
</comment>
<comment type="similarity">
    <text evidence="1">Belongs to the bacterial ribosomal protein bS18 family.</text>
</comment>
<keyword id="KW-1185">Reference proteome</keyword>
<keyword id="KW-0687">Ribonucleoprotein</keyword>
<keyword id="KW-0689">Ribosomal protein</keyword>
<keyword id="KW-0694">RNA-binding</keyword>
<keyword id="KW-0699">rRNA-binding</keyword>
<gene>
    <name evidence="1" type="primary">rpsR</name>
    <name type="ordered locus">CHU_2592</name>
</gene>
<name>RS18_CYTH3</name>
<protein>
    <recommendedName>
        <fullName evidence="1">Small ribosomal subunit protein bS18</fullName>
    </recommendedName>
    <alternativeName>
        <fullName evidence="2">30S ribosomal protein S18</fullName>
    </alternativeName>
</protein>
<dbReference type="EMBL" id="CP000383">
    <property type="protein sequence ID" value="ABG59845.1"/>
    <property type="molecule type" value="Genomic_DNA"/>
</dbReference>
<dbReference type="RefSeq" id="WP_011585955.1">
    <property type="nucleotide sequence ID" value="NC_008255.1"/>
</dbReference>
<dbReference type="SMR" id="Q11RW9"/>
<dbReference type="STRING" id="269798.CHU_2592"/>
<dbReference type="KEGG" id="chu:CHU_2592"/>
<dbReference type="eggNOG" id="COG0238">
    <property type="taxonomic scope" value="Bacteria"/>
</dbReference>
<dbReference type="HOGENOM" id="CLU_148710_2_2_10"/>
<dbReference type="OrthoDB" id="9812008at2"/>
<dbReference type="Proteomes" id="UP000001822">
    <property type="component" value="Chromosome"/>
</dbReference>
<dbReference type="GO" id="GO:0022627">
    <property type="term" value="C:cytosolic small ribosomal subunit"/>
    <property type="evidence" value="ECO:0007669"/>
    <property type="project" value="TreeGrafter"/>
</dbReference>
<dbReference type="GO" id="GO:0070181">
    <property type="term" value="F:small ribosomal subunit rRNA binding"/>
    <property type="evidence" value="ECO:0007669"/>
    <property type="project" value="TreeGrafter"/>
</dbReference>
<dbReference type="GO" id="GO:0003735">
    <property type="term" value="F:structural constituent of ribosome"/>
    <property type="evidence" value="ECO:0007669"/>
    <property type="project" value="InterPro"/>
</dbReference>
<dbReference type="GO" id="GO:0006412">
    <property type="term" value="P:translation"/>
    <property type="evidence" value="ECO:0007669"/>
    <property type="project" value="UniProtKB-UniRule"/>
</dbReference>
<dbReference type="FunFam" id="4.10.640.10:FF:000004">
    <property type="entry name" value="30S ribosomal protein S18"/>
    <property type="match status" value="1"/>
</dbReference>
<dbReference type="Gene3D" id="4.10.640.10">
    <property type="entry name" value="Ribosomal protein S18"/>
    <property type="match status" value="1"/>
</dbReference>
<dbReference type="HAMAP" id="MF_00270">
    <property type="entry name" value="Ribosomal_bS18"/>
    <property type="match status" value="1"/>
</dbReference>
<dbReference type="InterPro" id="IPR001648">
    <property type="entry name" value="Ribosomal_bS18"/>
</dbReference>
<dbReference type="InterPro" id="IPR018275">
    <property type="entry name" value="Ribosomal_bS18_CS"/>
</dbReference>
<dbReference type="InterPro" id="IPR036870">
    <property type="entry name" value="Ribosomal_bS18_sf"/>
</dbReference>
<dbReference type="NCBIfam" id="TIGR00165">
    <property type="entry name" value="S18"/>
    <property type="match status" value="1"/>
</dbReference>
<dbReference type="PANTHER" id="PTHR13479">
    <property type="entry name" value="30S RIBOSOMAL PROTEIN S18"/>
    <property type="match status" value="1"/>
</dbReference>
<dbReference type="PANTHER" id="PTHR13479:SF40">
    <property type="entry name" value="SMALL RIBOSOMAL SUBUNIT PROTEIN BS18M"/>
    <property type="match status" value="1"/>
</dbReference>
<dbReference type="Pfam" id="PF01084">
    <property type="entry name" value="Ribosomal_S18"/>
    <property type="match status" value="1"/>
</dbReference>
<dbReference type="PRINTS" id="PR00974">
    <property type="entry name" value="RIBOSOMALS18"/>
</dbReference>
<dbReference type="SUPFAM" id="SSF46911">
    <property type="entry name" value="Ribosomal protein S18"/>
    <property type="match status" value="1"/>
</dbReference>
<dbReference type="PROSITE" id="PS00057">
    <property type="entry name" value="RIBOSOMAL_S18"/>
    <property type="match status" value="1"/>
</dbReference>
<proteinExistence type="inferred from homology"/>
<organism>
    <name type="scientific">Cytophaga hutchinsonii (strain ATCC 33406 / DSM 1761 / CIP 103989 / NBRC 15051 / NCIMB 9469 / D465)</name>
    <dbReference type="NCBI Taxonomy" id="269798"/>
    <lineage>
        <taxon>Bacteria</taxon>
        <taxon>Pseudomonadati</taxon>
        <taxon>Bacteroidota</taxon>
        <taxon>Cytophagia</taxon>
        <taxon>Cytophagales</taxon>
        <taxon>Cytophagaceae</taxon>
        <taxon>Cytophaga</taxon>
    </lineage>
</organism>
<evidence type="ECO:0000255" key="1">
    <source>
        <dbReference type="HAMAP-Rule" id="MF_00270"/>
    </source>
</evidence>
<evidence type="ECO:0000305" key="2"/>